<organism>
    <name type="scientific">Laribacter hongkongensis (strain HLHK9)</name>
    <dbReference type="NCBI Taxonomy" id="557598"/>
    <lineage>
        <taxon>Bacteria</taxon>
        <taxon>Pseudomonadati</taxon>
        <taxon>Pseudomonadota</taxon>
        <taxon>Betaproteobacteria</taxon>
        <taxon>Neisseriales</taxon>
        <taxon>Aquaspirillaceae</taxon>
        <taxon>Laribacter</taxon>
    </lineage>
</organism>
<evidence type="ECO:0000255" key="1">
    <source>
        <dbReference type="HAMAP-Rule" id="MF_00539"/>
    </source>
</evidence>
<evidence type="ECO:0000256" key="2">
    <source>
        <dbReference type="SAM" id="MobiDB-lite"/>
    </source>
</evidence>
<evidence type="ECO:0000305" key="3"/>
<feature type="chain" id="PRO_1000146535" description="Large ribosomal subunit protein bL27">
    <location>
        <begin position="1"/>
        <end position="90"/>
    </location>
</feature>
<feature type="region of interest" description="Disordered" evidence="2">
    <location>
        <begin position="1"/>
        <end position="21"/>
    </location>
</feature>
<name>RL27_LARHH</name>
<accession>C1D505</accession>
<reference key="1">
    <citation type="journal article" date="2009" name="PLoS Genet.">
        <title>The complete genome and proteome of Laribacter hongkongensis reveal potential mechanisms for adaptations to different temperatures and habitats.</title>
        <authorList>
            <person name="Woo P.C.Y."/>
            <person name="Lau S.K.P."/>
            <person name="Tse H."/>
            <person name="Teng J.L.L."/>
            <person name="Curreem S.O."/>
            <person name="Tsang A.K.L."/>
            <person name="Fan R.Y.Y."/>
            <person name="Wong G.K.M."/>
            <person name="Huang Y."/>
            <person name="Loman N.J."/>
            <person name="Snyder L.A.S."/>
            <person name="Cai J.J."/>
            <person name="Huang J.-D."/>
            <person name="Mak W."/>
            <person name="Pallen M.J."/>
            <person name="Lok S."/>
            <person name="Yuen K.-Y."/>
        </authorList>
    </citation>
    <scope>NUCLEOTIDE SEQUENCE [LARGE SCALE GENOMIC DNA]</scope>
    <source>
        <strain>HLHK9</strain>
    </source>
</reference>
<keyword id="KW-1185">Reference proteome</keyword>
<keyword id="KW-0687">Ribonucleoprotein</keyword>
<keyword id="KW-0689">Ribosomal protein</keyword>
<sequence length="90" mass="9673">MAHKKAGGSSRNGRDSQAKRLGTKVYGGELIPAGSIIIRQRGTRFHAGENVGMGKDHTLFAKVDGYVKFVVKGALKRKTVIVEQYTGEAA</sequence>
<protein>
    <recommendedName>
        <fullName evidence="1">Large ribosomal subunit protein bL27</fullName>
    </recommendedName>
    <alternativeName>
        <fullName evidence="3">50S ribosomal protein L27</fullName>
    </alternativeName>
</protein>
<proteinExistence type="inferred from homology"/>
<comment type="similarity">
    <text evidence="1">Belongs to the bacterial ribosomal protein bL27 family.</text>
</comment>
<dbReference type="EMBL" id="CP001154">
    <property type="protein sequence ID" value="ACO75946.1"/>
    <property type="molecule type" value="Genomic_DNA"/>
</dbReference>
<dbReference type="RefSeq" id="WP_012698409.1">
    <property type="nucleotide sequence ID" value="NC_012559.1"/>
</dbReference>
<dbReference type="SMR" id="C1D505"/>
<dbReference type="STRING" id="557598.LHK_02968"/>
<dbReference type="GeneID" id="75108195"/>
<dbReference type="KEGG" id="lhk:LHK_02968"/>
<dbReference type="eggNOG" id="COG0211">
    <property type="taxonomic scope" value="Bacteria"/>
</dbReference>
<dbReference type="HOGENOM" id="CLU_095424_4_1_4"/>
<dbReference type="Proteomes" id="UP000002010">
    <property type="component" value="Chromosome"/>
</dbReference>
<dbReference type="GO" id="GO:0022625">
    <property type="term" value="C:cytosolic large ribosomal subunit"/>
    <property type="evidence" value="ECO:0007669"/>
    <property type="project" value="TreeGrafter"/>
</dbReference>
<dbReference type="GO" id="GO:0003735">
    <property type="term" value="F:structural constituent of ribosome"/>
    <property type="evidence" value="ECO:0007669"/>
    <property type="project" value="InterPro"/>
</dbReference>
<dbReference type="GO" id="GO:0006412">
    <property type="term" value="P:translation"/>
    <property type="evidence" value="ECO:0007669"/>
    <property type="project" value="UniProtKB-UniRule"/>
</dbReference>
<dbReference type="FunFam" id="2.40.50.100:FF:000001">
    <property type="entry name" value="50S ribosomal protein L27"/>
    <property type="match status" value="1"/>
</dbReference>
<dbReference type="Gene3D" id="2.40.50.100">
    <property type="match status" value="1"/>
</dbReference>
<dbReference type="HAMAP" id="MF_00539">
    <property type="entry name" value="Ribosomal_bL27"/>
    <property type="match status" value="1"/>
</dbReference>
<dbReference type="InterPro" id="IPR001684">
    <property type="entry name" value="Ribosomal_bL27"/>
</dbReference>
<dbReference type="InterPro" id="IPR018261">
    <property type="entry name" value="Ribosomal_bL27_CS"/>
</dbReference>
<dbReference type="NCBIfam" id="TIGR00062">
    <property type="entry name" value="L27"/>
    <property type="match status" value="1"/>
</dbReference>
<dbReference type="PANTHER" id="PTHR15893:SF0">
    <property type="entry name" value="LARGE RIBOSOMAL SUBUNIT PROTEIN BL27M"/>
    <property type="match status" value="1"/>
</dbReference>
<dbReference type="PANTHER" id="PTHR15893">
    <property type="entry name" value="RIBOSOMAL PROTEIN L27"/>
    <property type="match status" value="1"/>
</dbReference>
<dbReference type="Pfam" id="PF01016">
    <property type="entry name" value="Ribosomal_L27"/>
    <property type="match status" value="1"/>
</dbReference>
<dbReference type="PRINTS" id="PR00063">
    <property type="entry name" value="RIBOSOMALL27"/>
</dbReference>
<dbReference type="SUPFAM" id="SSF110324">
    <property type="entry name" value="Ribosomal L27 protein-like"/>
    <property type="match status" value="1"/>
</dbReference>
<dbReference type="PROSITE" id="PS00831">
    <property type="entry name" value="RIBOSOMAL_L27"/>
    <property type="match status" value="1"/>
</dbReference>
<gene>
    <name evidence="1" type="primary">rpmA</name>
    <name type="ordered locus">LHK_02968</name>
</gene>